<proteinExistence type="inferred from homology"/>
<keyword id="KW-0227">DNA damage</keyword>
<keyword id="KW-0234">DNA repair</keyword>
<keyword id="KW-0255">Endonuclease</keyword>
<keyword id="KW-0378">Hydrolase</keyword>
<keyword id="KW-0479">Metal-binding</keyword>
<keyword id="KW-0540">Nuclease</keyword>
<keyword id="KW-0862">Zinc</keyword>
<name>END4_ENT38</name>
<gene>
    <name evidence="1" type="primary">nfo</name>
    <name type="ordered locus">Ent638_2760</name>
</gene>
<sequence>MKYVGAHVSAAGGLANAAIRAAEIEATAFALFTKNQRQWRAAPLTPEIINDFKAACEKYNFGPGQILPHDSYLINLGHPVQEALDKSREAFLDELQRCEQLGLTLLNFHPGSHLMQIDEDACLARIAESINIALAQTEGVTAVIENTAGQGSNLGFKFEHLAAIIDGVEDKTRVGVCIDTCHAFAAGYDLRSQEECEKTFAEFERIVGFKYLRGMHLNDAKSAFGSRVDRHHSLGEGNIGHDAFRFIMQDPRFDGIPMVLETVNPDIWAEEIAWLKAQQTAEQAA</sequence>
<accession>A4WCJ5</accession>
<organism>
    <name type="scientific">Enterobacter sp. (strain 638)</name>
    <dbReference type="NCBI Taxonomy" id="399742"/>
    <lineage>
        <taxon>Bacteria</taxon>
        <taxon>Pseudomonadati</taxon>
        <taxon>Pseudomonadota</taxon>
        <taxon>Gammaproteobacteria</taxon>
        <taxon>Enterobacterales</taxon>
        <taxon>Enterobacteriaceae</taxon>
        <taxon>Enterobacter</taxon>
    </lineage>
</organism>
<reference key="1">
    <citation type="journal article" date="2010" name="PLoS Genet.">
        <title>Genome sequence of the plant growth promoting endophytic bacterium Enterobacter sp. 638.</title>
        <authorList>
            <person name="Taghavi S."/>
            <person name="van der Lelie D."/>
            <person name="Hoffman A."/>
            <person name="Zhang Y.B."/>
            <person name="Walla M.D."/>
            <person name="Vangronsveld J."/>
            <person name="Newman L."/>
            <person name="Monchy S."/>
        </authorList>
    </citation>
    <scope>NUCLEOTIDE SEQUENCE [LARGE SCALE GENOMIC DNA]</scope>
    <source>
        <strain>638</strain>
    </source>
</reference>
<comment type="function">
    <text evidence="1">Endonuclease IV plays a role in DNA repair. It cleaves phosphodiester bonds at apurinic or apyrimidinic (AP) sites, generating a 3'-hydroxyl group and a 5'-terminal sugar phosphate.</text>
</comment>
<comment type="catalytic activity">
    <reaction evidence="1">
        <text>Endonucleolytic cleavage to 5'-phosphooligonucleotide end-products.</text>
        <dbReference type="EC" id="3.1.21.2"/>
    </reaction>
</comment>
<comment type="cofactor">
    <cofactor evidence="1">
        <name>Zn(2+)</name>
        <dbReference type="ChEBI" id="CHEBI:29105"/>
    </cofactor>
    <text evidence="1">Binds 3 Zn(2+) ions.</text>
</comment>
<comment type="similarity">
    <text evidence="1">Belongs to the AP endonuclease 2 family.</text>
</comment>
<protein>
    <recommendedName>
        <fullName evidence="1">Probable endonuclease 4</fullName>
        <ecNumber evidence="1">3.1.21.2</ecNumber>
    </recommendedName>
    <alternativeName>
        <fullName evidence="1">Endodeoxyribonuclease IV</fullName>
    </alternativeName>
    <alternativeName>
        <fullName evidence="1">Endonuclease IV</fullName>
    </alternativeName>
</protein>
<feature type="chain" id="PRO_1000058176" description="Probable endonuclease 4">
    <location>
        <begin position="1"/>
        <end position="285"/>
    </location>
</feature>
<feature type="binding site" evidence="1">
    <location>
        <position position="69"/>
    </location>
    <ligand>
        <name>Zn(2+)</name>
        <dbReference type="ChEBI" id="CHEBI:29105"/>
        <label>1</label>
    </ligand>
</feature>
<feature type="binding site" evidence="1">
    <location>
        <position position="109"/>
    </location>
    <ligand>
        <name>Zn(2+)</name>
        <dbReference type="ChEBI" id="CHEBI:29105"/>
        <label>1</label>
    </ligand>
</feature>
<feature type="binding site" evidence="1">
    <location>
        <position position="145"/>
    </location>
    <ligand>
        <name>Zn(2+)</name>
        <dbReference type="ChEBI" id="CHEBI:29105"/>
        <label>1</label>
    </ligand>
</feature>
<feature type="binding site" evidence="1">
    <location>
        <position position="145"/>
    </location>
    <ligand>
        <name>Zn(2+)</name>
        <dbReference type="ChEBI" id="CHEBI:29105"/>
        <label>2</label>
    </ligand>
</feature>
<feature type="binding site" evidence="1">
    <location>
        <position position="179"/>
    </location>
    <ligand>
        <name>Zn(2+)</name>
        <dbReference type="ChEBI" id="CHEBI:29105"/>
        <label>2</label>
    </ligand>
</feature>
<feature type="binding site" evidence="1">
    <location>
        <position position="182"/>
    </location>
    <ligand>
        <name>Zn(2+)</name>
        <dbReference type="ChEBI" id="CHEBI:29105"/>
        <label>3</label>
    </ligand>
</feature>
<feature type="binding site" evidence="1">
    <location>
        <position position="216"/>
    </location>
    <ligand>
        <name>Zn(2+)</name>
        <dbReference type="ChEBI" id="CHEBI:29105"/>
        <label>2</label>
    </ligand>
</feature>
<feature type="binding site" evidence="1">
    <location>
        <position position="229"/>
    </location>
    <ligand>
        <name>Zn(2+)</name>
        <dbReference type="ChEBI" id="CHEBI:29105"/>
        <label>3</label>
    </ligand>
</feature>
<feature type="binding site" evidence="1">
    <location>
        <position position="231"/>
    </location>
    <ligand>
        <name>Zn(2+)</name>
        <dbReference type="ChEBI" id="CHEBI:29105"/>
        <label>3</label>
    </ligand>
</feature>
<feature type="binding site" evidence="1">
    <location>
        <position position="261"/>
    </location>
    <ligand>
        <name>Zn(2+)</name>
        <dbReference type="ChEBI" id="CHEBI:29105"/>
        <label>2</label>
    </ligand>
</feature>
<dbReference type="EC" id="3.1.21.2" evidence="1"/>
<dbReference type="EMBL" id="CP000653">
    <property type="protein sequence ID" value="ABP61425.1"/>
    <property type="molecule type" value="Genomic_DNA"/>
</dbReference>
<dbReference type="RefSeq" id="WP_015959758.1">
    <property type="nucleotide sequence ID" value="NC_009436.1"/>
</dbReference>
<dbReference type="SMR" id="A4WCJ5"/>
<dbReference type="STRING" id="399742.Ent638_2760"/>
<dbReference type="KEGG" id="ent:Ent638_2760"/>
<dbReference type="eggNOG" id="COG0648">
    <property type="taxonomic scope" value="Bacteria"/>
</dbReference>
<dbReference type="HOGENOM" id="CLU_025885_0_4_6"/>
<dbReference type="OrthoDB" id="9805666at2"/>
<dbReference type="Proteomes" id="UP000000230">
    <property type="component" value="Chromosome"/>
</dbReference>
<dbReference type="GO" id="GO:0008833">
    <property type="term" value="F:deoxyribonuclease IV (phage-T4-induced) activity"/>
    <property type="evidence" value="ECO:0007669"/>
    <property type="project" value="UniProtKB-UniRule"/>
</dbReference>
<dbReference type="GO" id="GO:0003677">
    <property type="term" value="F:DNA binding"/>
    <property type="evidence" value="ECO:0007669"/>
    <property type="project" value="InterPro"/>
</dbReference>
<dbReference type="GO" id="GO:0003906">
    <property type="term" value="F:DNA-(apurinic or apyrimidinic site) endonuclease activity"/>
    <property type="evidence" value="ECO:0007669"/>
    <property type="project" value="TreeGrafter"/>
</dbReference>
<dbReference type="GO" id="GO:0008081">
    <property type="term" value="F:phosphoric diester hydrolase activity"/>
    <property type="evidence" value="ECO:0007669"/>
    <property type="project" value="TreeGrafter"/>
</dbReference>
<dbReference type="GO" id="GO:0008270">
    <property type="term" value="F:zinc ion binding"/>
    <property type="evidence" value="ECO:0007669"/>
    <property type="project" value="UniProtKB-UniRule"/>
</dbReference>
<dbReference type="GO" id="GO:0006284">
    <property type="term" value="P:base-excision repair"/>
    <property type="evidence" value="ECO:0007669"/>
    <property type="project" value="TreeGrafter"/>
</dbReference>
<dbReference type="CDD" id="cd00019">
    <property type="entry name" value="AP2Ec"/>
    <property type="match status" value="1"/>
</dbReference>
<dbReference type="FunFam" id="3.20.20.150:FF:000001">
    <property type="entry name" value="Probable endonuclease 4"/>
    <property type="match status" value="1"/>
</dbReference>
<dbReference type="Gene3D" id="3.20.20.150">
    <property type="entry name" value="Divalent-metal-dependent TIM barrel enzymes"/>
    <property type="match status" value="1"/>
</dbReference>
<dbReference type="HAMAP" id="MF_00152">
    <property type="entry name" value="Nfo"/>
    <property type="match status" value="1"/>
</dbReference>
<dbReference type="InterPro" id="IPR001719">
    <property type="entry name" value="AP_endonuc_2"/>
</dbReference>
<dbReference type="InterPro" id="IPR018246">
    <property type="entry name" value="AP_endonuc_F2_Zn_BS"/>
</dbReference>
<dbReference type="InterPro" id="IPR036237">
    <property type="entry name" value="Xyl_isomerase-like_sf"/>
</dbReference>
<dbReference type="InterPro" id="IPR013022">
    <property type="entry name" value="Xyl_isomerase-like_TIM-brl"/>
</dbReference>
<dbReference type="NCBIfam" id="TIGR00587">
    <property type="entry name" value="nfo"/>
    <property type="match status" value="1"/>
</dbReference>
<dbReference type="NCBIfam" id="NF002199">
    <property type="entry name" value="PRK01060.1-4"/>
    <property type="match status" value="1"/>
</dbReference>
<dbReference type="PANTHER" id="PTHR21445:SF0">
    <property type="entry name" value="APURINIC-APYRIMIDINIC ENDONUCLEASE"/>
    <property type="match status" value="1"/>
</dbReference>
<dbReference type="PANTHER" id="PTHR21445">
    <property type="entry name" value="ENDONUCLEASE IV ENDODEOXYRIBONUCLEASE IV"/>
    <property type="match status" value="1"/>
</dbReference>
<dbReference type="Pfam" id="PF01261">
    <property type="entry name" value="AP_endonuc_2"/>
    <property type="match status" value="1"/>
</dbReference>
<dbReference type="SMART" id="SM00518">
    <property type="entry name" value="AP2Ec"/>
    <property type="match status" value="1"/>
</dbReference>
<dbReference type="SUPFAM" id="SSF51658">
    <property type="entry name" value="Xylose isomerase-like"/>
    <property type="match status" value="1"/>
</dbReference>
<dbReference type="PROSITE" id="PS00729">
    <property type="entry name" value="AP_NUCLEASE_F2_1"/>
    <property type="match status" value="1"/>
</dbReference>
<dbReference type="PROSITE" id="PS00730">
    <property type="entry name" value="AP_NUCLEASE_F2_2"/>
    <property type="match status" value="1"/>
</dbReference>
<dbReference type="PROSITE" id="PS00731">
    <property type="entry name" value="AP_NUCLEASE_F2_3"/>
    <property type="match status" value="1"/>
</dbReference>
<dbReference type="PROSITE" id="PS51432">
    <property type="entry name" value="AP_NUCLEASE_F2_4"/>
    <property type="match status" value="1"/>
</dbReference>
<evidence type="ECO:0000255" key="1">
    <source>
        <dbReference type="HAMAP-Rule" id="MF_00152"/>
    </source>
</evidence>